<comment type="function">
    <text evidence="1">Catalyzes the transfer of a dimethylallyl group onto the adenine at position 37 in tRNAs that read codons beginning with uridine, leading to the formation of N6-(dimethylallyl)adenosine (i(6)A).</text>
</comment>
<comment type="catalytic activity">
    <reaction evidence="1">
        <text>adenosine(37) in tRNA + dimethylallyl diphosphate = N(6)-dimethylallyladenosine(37) in tRNA + diphosphate</text>
        <dbReference type="Rhea" id="RHEA:26482"/>
        <dbReference type="Rhea" id="RHEA-COMP:10162"/>
        <dbReference type="Rhea" id="RHEA-COMP:10375"/>
        <dbReference type="ChEBI" id="CHEBI:33019"/>
        <dbReference type="ChEBI" id="CHEBI:57623"/>
        <dbReference type="ChEBI" id="CHEBI:74411"/>
        <dbReference type="ChEBI" id="CHEBI:74415"/>
        <dbReference type="EC" id="2.5.1.75"/>
    </reaction>
</comment>
<comment type="cofactor">
    <cofactor evidence="1">
        <name>Mg(2+)</name>
        <dbReference type="ChEBI" id="CHEBI:18420"/>
    </cofactor>
</comment>
<comment type="subunit">
    <text evidence="1">Monomer.</text>
</comment>
<comment type="similarity">
    <text evidence="1">Belongs to the IPP transferase family.</text>
</comment>
<accession>Q5YT12</accession>
<organism>
    <name type="scientific">Nocardia farcinica (strain IFM 10152)</name>
    <dbReference type="NCBI Taxonomy" id="247156"/>
    <lineage>
        <taxon>Bacteria</taxon>
        <taxon>Bacillati</taxon>
        <taxon>Actinomycetota</taxon>
        <taxon>Actinomycetes</taxon>
        <taxon>Mycobacteriales</taxon>
        <taxon>Nocardiaceae</taxon>
        <taxon>Nocardia</taxon>
    </lineage>
</organism>
<proteinExistence type="inferred from homology"/>
<name>MIAA_NOCFA</name>
<evidence type="ECO:0000255" key="1">
    <source>
        <dbReference type="HAMAP-Rule" id="MF_00185"/>
    </source>
</evidence>
<dbReference type="EC" id="2.5.1.75" evidence="1"/>
<dbReference type="EMBL" id="AP006618">
    <property type="protein sequence ID" value="BAD58679.1"/>
    <property type="molecule type" value="Genomic_DNA"/>
</dbReference>
<dbReference type="RefSeq" id="WP_011210364.1">
    <property type="nucleotide sequence ID" value="NC_006361.1"/>
</dbReference>
<dbReference type="SMR" id="Q5YT12"/>
<dbReference type="STRING" id="247156.NFA_38310"/>
<dbReference type="GeneID" id="61134518"/>
<dbReference type="KEGG" id="nfa:NFA_38310"/>
<dbReference type="eggNOG" id="COG0324">
    <property type="taxonomic scope" value="Bacteria"/>
</dbReference>
<dbReference type="HOGENOM" id="CLU_032616_0_1_11"/>
<dbReference type="OrthoDB" id="9776390at2"/>
<dbReference type="Proteomes" id="UP000006820">
    <property type="component" value="Chromosome"/>
</dbReference>
<dbReference type="GO" id="GO:0005524">
    <property type="term" value="F:ATP binding"/>
    <property type="evidence" value="ECO:0007669"/>
    <property type="project" value="UniProtKB-UniRule"/>
</dbReference>
<dbReference type="GO" id="GO:0052381">
    <property type="term" value="F:tRNA dimethylallyltransferase activity"/>
    <property type="evidence" value="ECO:0007669"/>
    <property type="project" value="UniProtKB-UniRule"/>
</dbReference>
<dbReference type="GO" id="GO:0006400">
    <property type="term" value="P:tRNA modification"/>
    <property type="evidence" value="ECO:0007669"/>
    <property type="project" value="TreeGrafter"/>
</dbReference>
<dbReference type="FunFam" id="1.10.20.140:FF:000001">
    <property type="entry name" value="tRNA dimethylallyltransferase"/>
    <property type="match status" value="1"/>
</dbReference>
<dbReference type="Gene3D" id="1.10.20.140">
    <property type="match status" value="1"/>
</dbReference>
<dbReference type="Gene3D" id="3.40.50.300">
    <property type="entry name" value="P-loop containing nucleotide triphosphate hydrolases"/>
    <property type="match status" value="1"/>
</dbReference>
<dbReference type="HAMAP" id="MF_00185">
    <property type="entry name" value="IPP_trans"/>
    <property type="match status" value="1"/>
</dbReference>
<dbReference type="InterPro" id="IPR039657">
    <property type="entry name" value="Dimethylallyltransferase"/>
</dbReference>
<dbReference type="InterPro" id="IPR018022">
    <property type="entry name" value="IPT"/>
</dbReference>
<dbReference type="InterPro" id="IPR027417">
    <property type="entry name" value="P-loop_NTPase"/>
</dbReference>
<dbReference type="NCBIfam" id="TIGR00174">
    <property type="entry name" value="miaA"/>
    <property type="match status" value="1"/>
</dbReference>
<dbReference type="PANTHER" id="PTHR11088">
    <property type="entry name" value="TRNA DIMETHYLALLYLTRANSFERASE"/>
    <property type="match status" value="1"/>
</dbReference>
<dbReference type="PANTHER" id="PTHR11088:SF60">
    <property type="entry name" value="TRNA DIMETHYLALLYLTRANSFERASE"/>
    <property type="match status" value="1"/>
</dbReference>
<dbReference type="Pfam" id="PF01715">
    <property type="entry name" value="IPPT"/>
    <property type="match status" value="1"/>
</dbReference>
<dbReference type="SUPFAM" id="SSF52540">
    <property type="entry name" value="P-loop containing nucleoside triphosphate hydrolases"/>
    <property type="match status" value="1"/>
</dbReference>
<sequence length="313" mass="34008">MRVPIAVVGPTATGKSELGLALAEHLDGEIVNIDAMQLYRGMDIGTAKLPVAERRGIPHHQLDVLDVTETASVATYQRNAAADVEAILARGRTPVIVGGSMMYVQALLDDWEFPATDPAVRAKWERLLATEGVAAVHAALRAADPAAAATILPTDGRRMVRALEVVELTGKPFAASAPRIGTPRWGTIILGVDRDTAELDERIARRTALMFDSGLVAEVRGLVERGLREGVTARRAIGYAHVLAYLDNEYDLEHAKERTLIGTRRYVRRQRSWFRRDPRVRWLDGADPGLVTTALALLGDAAAAPATTERTTQ</sequence>
<protein>
    <recommendedName>
        <fullName evidence="1">tRNA dimethylallyltransferase</fullName>
        <ecNumber evidence="1">2.5.1.75</ecNumber>
    </recommendedName>
    <alternativeName>
        <fullName evidence="1">Dimethylallyl diphosphate:tRNA dimethylallyltransferase</fullName>
        <shortName evidence="1">DMAPP:tRNA dimethylallyltransferase</shortName>
        <shortName evidence="1">DMATase</shortName>
    </alternativeName>
    <alternativeName>
        <fullName evidence="1">Isopentenyl-diphosphate:tRNA isopentenyltransferase</fullName>
        <shortName evidence="1">IPP transferase</shortName>
        <shortName evidence="1">IPPT</shortName>
        <shortName evidence="1">IPTase</shortName>
    </alternativeName>
</protein>
<reference key="1">
    <citation type="journal article" date="2004" name="Proc. Natl. Acad. Sci. U.S.A.">
        <title>The complete genomic sequence of Nocardia farcinica IFM 10152.</title>
        <authorList>
            <person name="Ishikawa J."/>
            <person name="Yamashita A."/>
            <person name="Mikami Y."/>
            <person name="Hoshino Y."/>
            <person name="Kurita H."/>
            <person name="Hotta K."/>
            <person name="Shiba T."/>
            <person name="Hattori M."/>
        </authorList>
    </citation>
    <scope>NUCLEOTIDE SEQUENCE [LARGE SCALE GENOMIC DNA]</scope>
    <source>
        <strain>IFM 10152</strain>
    </source>
</reference>
<gene>
    <name evidence="1" type="primary">miaA</name>
    <name type="ordered locus">NFA_38310</name>
</gene>
<feature type="chain" id="PRO_0000163946" description="tRNA dimethylallyltransferase">
    <location>
        <begin position="1"/>
        <end position="313"/>
    </location>
</feature>
<feature type="binding site" evidence="1">
    <location>
        <begin position="9"/>
        <end position="16"/>
    </location>
    <ligand>
        <name>ATP</name>
        <dbReference type="ChEBI" id="CHEBI:30616"/>
    </ligand>
</feature>
<feature type="binding site" evidence="1">
    <location>
        <begin position="11"/>
        <end position="16"/>
    </location>
    <ligand>
        <name>substrate</name>
    </ligand>
</feature>
<feature type="site" description="Interaction with substrate tRNA" evidence="1">
    <location>
        <position position="100"/>
    </location>
</feature>
<feature type="site" description="Interaction with substrate tRNA" evidence="1">
    <location>
        <position position="121"/>
    </location>
</feature>
<keyword id="KW-0067">ATP-binding</keyword>
<keyword id="KW-0460">Magnesium</keyword>
<keyword id="KW-0547">Nucleotide-binding</keyword>
<keyword id="KW-1185">Reference proteome</keyword>
<keyword id="KW-0808">Transferase</keyword>
<keyword id="KW-0819">tRNA processing</keyword>